<name>HTPG_YERPA</name>
<reference key="1">
    <citation type="journal article" date="2006" name="J. Bacteriol.">
        <title>Complete genome sequence of Yersinia pestis strains Antiqua and Nepal516: evidence of gene reduction in an emerging pathogen.</title>
        <authorList>
            <person name="Chain P.S.G."/>
            <person name="Hu P."/>
            <person name="Malfatti S.A."/>
            <person name="Radnedge L."/>
            <person name="Larimer F."/>
            <person name="Vergez L.M."/>
            <person name="Worsham P."/>
            <person name="Chu M.C."/>
            <person name="Andersen G.L."/>
        </authorList>
    </citation>
    <scope>NUCLEOTIDE SEQUENCE [LARGE SCALE GENOMIC DNA]</scope>
    <source>
        <strain>Antiqua</strain>
    </source>
</reference>
<accession>Q1C4P8</accession>
<comment type="function">
    <text evidence="1">Molecular chaperone. Has ATPase activity.</text>
</comment>
<comment type="subunit">
    <text evidence="1">Homodimer.</text>
</comment>
<comment type="subcellular location">
    <subcellularLocation>
        <location evidence="1">Cytoplasm</location>
    </subcellularLocation>
</comment>
<comment type="similarity">
    <text evidence="1">Belongs to the heat shock protein 90 family.</text>
</comment>
<evidence type="ECO:0000255" key="1">
    <source>
        <dbReference type="HAMAP-Rule" id="MF_00505"/>
    </source>
</evidence>
<proteinExistence type="inferred from homology"/>
<protein>
    <recommendedName>
        <fullName evidence="1">Chaperone protein HtpG</fullName>
    </recommendedName>
    <alternativeName>
        <fullName evidence="1">Heat shock protein HtpG</fullName>
    </alternativeName>
    <alternativeName>
        <fullName evidence="1">High temperature protein G</fullName>
    </alternativeName>
</protein>
<dbReference type="EMBL" id="CP000308">
    <property type="protein sequence ID" value="ABG14574.1"/>
    <property type="molecule type" value="Genomic_DNA"/>
</dbReference>
<dbReference type="SMR" id="Q1C4P8"/>
<dbReference type="KEGG" id="ypa:YPA_2612"/>
<dbReference type="Proteomes" id="UP000001971">
    <property type="component" value="Chromosome"/>
</dbReference>
<dbReference type="GO" id="GO:0005737">
    <property type="term" value="C:cytoplasm"/>
    <property type="evidence" value="ECO:0007669"/>
    <property type="project" value="UniProtKB-SubCell"/>
</dbReference>
<dbReference type="GO" id="GO:0005524">
    <property type="term" value="F:ATP binding"/>
    <property type="evidence" value="ECO:0007669"/>
    <property type="project" value="UniProtKB-UniRule"/>
</dbReference>
<dbReference type="GO" id="GO:0016887">
    <property type="term" value="F:ATP hydrolysis activity"/>
    <property type="evidence" value="ECO:0007669"/>
    <property type="project" value="InterPro"/>
</dbReference>
<dbReference type="GO" id="GO:0140662">
    <property type="term" value="F:ATP-dependent protein folding chaperone"/>
    <property type="evidence" value="ECO:0007669"/>
    <property type="project" value="InterPro"/>
</dbReference>
<dbReference type="GO" id="GO:0051082">
    <property type="term" value="F:unfolded protein binding"/>
    <property type="evidence" value="ECO:0007669"/>
    <property type="project" value="UniProtKB-UniRule"/>
</dbReference>
<dbReference type="CDD" id="cd16927">
    <property type="entry name" value="HATPase_Hsp90-like"/>
    <property type="match status" value="1"/>
</dbReference>
<dbReference type="FunFam" id="1.20.120.790:FF:000002">
    <property type="entry name" value="Molecular chaperone HtpG"/>
    <property type="match status" value="1"/>
</dbReference>
<dbReference type="FunFam" id="3.30.230.80:FF:000002">
    <property type="entry name" value="Molecular chaperone HtpG"/>
    <property type="match status" value="1"/>
</dbReference>
<dbReference type="FunFam" id="3.30.565.10:FF:000009">
    <property type="entry name" value="Molecular chaperone HtpG"/>
    <property type="match status" value="1"/>
</dbReference>
<dbReference type="FunFam" id="3.40.50.11260:FF:000002">
    <property type="entry name" value="Molecular chaperone HtpG"/>
    <property type="match status" value="1"/>
</dbReference>
<dbReference type="Gene3D" id="3.30.230.80">
    <property type="match status" value="1"/>
</dbReference>
<dbReference type="Gene3D" id="3.40.50.11260">
    <property type="match status" value="1"/>
</dbReference>
<dbReference type="Gene3D" id="1.20.120.790">
    <property type="entry name" value="Heat shock protein 90, C-terminal domain"/>
    <property type="match status" value="1"/>
</dbReference>
<dbReference type="Gene3D" id="3.30.565.10">
    <property type="entry name" value="Histidine kinase-like ATPase, C-terminal domain"/>
    <property type="match status" value="1"/>
</dbReference>
<dbReference type="HAMAP" id="MF_00505">
    <property type="entry name" value="HSP90"/>
    <property type="match status" value="1"/>
</dbReference>
<dbReference type="InterPro" id="IPR036890">
    <property type="entry name" value="HATPase_C_sf"/>
</dbReference>
<dbReference type="InterPro" id="IPR019805">
    <property type="entry name" value="Heat_shock_protein_90_CS"/>
</dbReference>
<dbReference type="InterPro" id="IPR037196">
    <property type="entry name" value="HSP90_C"/>
</dbReference>
<dbReference type="InterPro" id="IPR001404">
    <property type="entry name" value="Hsp90_fam"/>
</dbReference>
<dbReference type="InterPro" id="IPR020575">
    <property type="entry name" value="Hsp90_N"/>
</dbReference>
<dbReference type="InterPro" id="IPR020568">
    <property type="entry name" value="Ribosomal_Su5_D2-typ_SF"/>
</dbReference>
<dbReference type="NCBIfam" id="NF003555">
    <property type="entry name" value="PRK05218.1"/>
    <property type="match status" value="1"/>
</dbReference>
<dbReference type="PANTHER" id="PTHR11528">
    <property type="entry name" value="HEAT SHOCK PROTEIN 90 FAMILY MEMBER"/>
    <property type="match status" value="1"/>
</dbReference>
<dbReference type="Pfam" id="PF13589">
    <property type="entry name" value="HATPase_c_3"/>
    <property type="match status" value="1"/>
</dbReference>
<dbReference type="Pfam" id="PF00183">
    <property type="entry name" value="HSP90"/>
    <property type="match status" value="1"/>
</dbReference>
<dbReference type="PIRSF" id="PIRSF002583">
    <property type="entry name" value="Hsp90"/>
    <property type="match status" value="1"/>
</dbReference>
<dbReference type="PRINTS" id="PR00775">
    <property type="entry name" value="HEATSHOCK90"/>
</dbReference>
<dbReference type="SMART" id="SM00387">
    <property type="entry name" value="HATPase_c"/>
    <property type="match status" value="1"/>
</dbReference>
<dbReference type="SUPFAM" id="SSF55874">
    <property type="entry name" value="ATPase domain of HSP90 chaperone/DNA topoisomerase II/histidine kinase"/>
    <property type="match status" value="1"/>
</dbReference>
<dbReference type="SUPFAM" id="SSF110942">
    <property type="entry name" value="HSP90 C-terminal domain"/>
    <property type="match status" value="1"/>
</dbReference>
<dbReference type="SUPFAM" id="SSF54211">
    <property type="entry name" value="Ribosomal protein S5 domain 2-like"/>
    <property type="match status" value="1"/>
</dbReference>
<dbReference type="PROSITE" id="PS00298">
    <property type="entry name" value="HSP90"/>
    <property type="match status" value="1"/>
</dbReference>
<sequence>MNMKGQETRGFQSEVKQLLHLMIHSLYSNKEIFLRELISNASDAADKLRFRALSNPELFEGDGELRVRLSFDKEKRTLTLSDNGIGMTRDEVIDNLGTIAKSGTKAFLESIGSDQAKDSQLIGQFGVGFYSAFIVADKVTVRTRAAGAPADTGVFWESAGEGDYTIADITKDERGTEITLHLREGEDEYLDDWRLRSVISKYSDHIALPVEIQVKNEEDGTVTWEKINKAQALWTRGKAEISDDEYKAFYKHIAHDFTDPLSWSHNRVEGKQEYTSLLYIPAQAPWDMWNRDHKHGLKLYVQRVFIMDEAEQFMPNYLRFVRGLIDSNDLPLNVSREILQDSRITQNLRSALTKRVLQMLEKLAKDDAEKYQQFWQQFGMALKEGPAEDGSNKETIAKLLRFASTHTDSSAQTVSLEDYVSRMAEGQEKIYYITADSYAAAKSSPHLELFRKKGIEVLLLSDRIDEWMMSYLTEFEGKAFQSVSKADDSLNKLADEENPEQQEAEKALEPFVERVKTLLGERVKDVRLTHRLTDTPAIVTTDADEMSTQMAKLFAAAGQQAPEVKYIFELNPDHGLVKRAAEVTDDTQFAQWVELLLDQALLAERGTLEDPNQFIRRMNQLLTA</sequence>
<keyword id="KW-0067">ATP-binding</keyword>
<keyword id="KW-0143">Chaperone</keyword>
<keyword id="KW-0963">Cytoplasm</keyword>
<keyword id="KW-0547">Nucleotide-binding</keyword>
<keyword id="KW-0346">Stress response</keyword>
<feature type="chain" id="PRO_0000258528" description="Chaperone protein HtpG">
    <location>
        <begin position="1"/>
        <end position="624"/>
    </location>
</feature>
<feature type="region of interest" description="A; substrate-binding" evidence="1">
    <location>
        <begin position="1"/>
        <end position="336"/>
    </location>
</feature>
<feature type="region of interest" description="B" evidence="1">
    <location>
        <begin position="337"/>
        <end position="552"/>
    </location>
</feature>
<feature type="region of interest" description="C" evidence="1">
    <location>
        <begin position="553"/>
        <end position="624"/>
    </location>
</feature>
<gene>
    <name evidence="1" type="primary">htpG</name>
    <name type="ordered locus">YPA_2612</name>
</gene>
<organism>
    <name type="scientific">Yersinia pestis bv. Antiqua (strain Antiqua)</name>
    <dbReference type="NCBI Taxonomy" id="360102"/>
    <lineage>
        <taxon>Bacteria</taxon>
        <taxon>Pseudomonadati</taxon>
        <taxon>Pseudomonadota</taxon>
        <taxon>Gammaproteobacteria</taxon>
        <taxon>Enterobacterales</taxon>
        <taxon>Yersiniaceae</taxon>
        <taxon>Yersinia</taxon>
    </lineage>
</organism>